<name>AROE_BACC4</name>
<organism>
    <name type="scientific">Bacillus cereus (strain B4264)</name>
    <dbReference type="NCBI Taxonomy" id="405532"/>
    <lineage>
        <taxon>Bacteria</taxon>
        <taxon>Bacillati</taxon>
        <taxon>Bacillota</taxon>
        <taxon>Bacilli</taxon>
        <taxon>Bacillales</taxon>
        <taxon>Bacillaceae</taxon>
        <taxon>Bacillus</taxon>
        <taxon>Bacillus cereus group</taxon>
    </lineage>
</organism>
<dbReference type="EC" id="1.1.1.25" evidence="1"/>
<dbReference type="EMBL" id="CP001176">
    <property type="protein sequence ID" value="ACK62339.1"/>
    <property type="molecule type" value="Genomic_DNA"/>
</dbReference>
<dbReference type="RefSeq" id="WP_000812076.1">
    <property type="nucleotide sequence ID" value="NZ_VEHB01000006.1"/>
</dbReference>
<dbReference type="SMR" id="B7HCW1"/>
<dbReference type="KEGG" id="bcb:BCB4264_A4454"/>
<dbReference type="HOGENOM" id="CLU_044063_4_1_9"/>
<dbReference type="UniPathway" id="UPA00053">
    <property type="reaction ID" value="UER00087"/>
</dbReference>
<dbReference type="Proteomes" id="UP000007096">
    <property type="component" value="Chromosome"/>
</dbReference>
<dbReference type="GO" id="GO:0005829">
    <property type="term" value="C:cytosol"/>
    <property type="evidence" value="ECO:0007669"/>
    <property type="project" value="TreeGrafter"/>
</dbReference>
<dbReference type="GO" id="GO:0050661">
    <property type="term" value="F:NADP binding"/>
    <property type="evidence" value="ECO:0007669"/>
    <property type="project" value="InterPro"/>
</dbReference>
<dbReference type="GO" id="GO:0004764">
    <property type="term" value="F:shikimate 3-dehydrogenase (NADP+) activity"/>
    <property type="evidence" value="ECO:0007669"/>
    <property type="project" value="UniProtKB-UniRule"/>
</dbReference>
<dbReference type="GO" id="GO:0008652">
    <property type="term" value="P:amino acid biosynthetic process"/>
    <property type="evidence" value="ECO:0007669"/>
    <property type="project" value="UniProtKB-KW"/>
</dbReference>
<dbReference type="GO" id="GO:0009073">
    <property type="term" value="P:aromatic amino acid family biosynthetic process"/>
    <property type="evidence" value="ECO:0007669"/>
    <property type="project" value="UniProtKB-KW"/>
</dbReference>
<dbReference type="GO" id="GO:0009423">
    <property type="term" value="P:chorismate biosynthetic process"/>
    <property type="evidence" value="ECO:0007669"/>
    <property type="project" value="UniProtKB-UniRule"/>
</dbReference>
<dbReference type="GO" id="GO:0019632">
    <property type="term" value="P:shikimate metabolic process"/>
    <property type="evidence" value="ECO:0007669"/>
    <property type="project" value="InterPro"/>
</dbReference>
<dbReference type="CDD" id="cd01065">
    <property type="entry name" value="NAD_bind_Shikimate_DH"/>
    <property type="match status" value="1"/>
</dbReference>
<dbReference type="FunFam" id="3.40.50.10860:FF:000011">
    <property type="entry name" value="Shikimate dehydrogenase (NADP(+))"/>
    <property type="match status" value="1"/>
</dbReference>
<dbReference type="FunFam" id="3.40.50.720:FF:000257">
    <property type="entry name" value="Shikimate dehydrogenase (NADP(+))"/>
    <property type="match status" value="1"/>
</dbReference>
<dbReference type="Gene3D" id="3.40.50.10860">
    <property type="entry name" value="Leucine Dehydrogenase, chain A, domain 1"/>
    <property type="match status" value="1"/>
</dbReference>
<dbReference type="Gene3D" id="3.40.50.720">
    <property type="entry name" value="NAD(P)-binding Rossmann-like Domain"/>
    <property type="match status" value="1"/>
</dbReference>
<dbReference type="HAMAP" id="MF_00222">
    <property type="entry name" value="Shikimate_DH_AroE"/>
    <property type="match status" value="1"/>
</dbReference>
<dbReference type="InterPro" id="IPR046346">
    <property type="entry name" value="Aminoacid_DH-like_N_sf"/>
</dbReference>
<dbReference type="InterPro" id="IPR036291">
    <property type="entry name" value="NAD(P)-bd_dom_sf"/>
</dbReference>
<dbReference type="InterPro" id="IPR041121">
    <property type="entry name" value="SDH_C"/>
</dbReference>
<dbReference type="InterPro" id="IPR011342">
    <property type="entry name" value="Shikimate_DH"/>
</dbReference>
<dbReference type="InterPro" id="IPR013708">
    <property type="entry name" value="Shikimate_DH-bd_N"/>
</dbReference>
<dbReference type="InterPro" id="IPR022893">
    <property type="entry name" value="Shikimate_DH_fam"/>
</dbReference>
<dbReference type="InterPro" id="IPR006151">
    <property type="entry name" value="Shikm_DH/Glu-tRNA_Rdtase"/>
</dbReference>
<dbReference type="NCBIfam" id="TIGR00507">
    <property type="entry name" value="aroE"/>
    <property type="match status" value="1"/>
</dbReference>
<dbReference type="NCBIfam" id="NF001319">
    <property type="entry name" value="PRK00258.3-3"/>
    <property type="match status" value="1"/>
</dbReference>
<dbReference type="PANTHER" id="PTHR21089:SF1">
    <property type="entry name" value="BIFUNCTIONAL 3-DEHYDROQUINATE DEHYDRATASE_SHIKIMATE DEHYDROGENASE, CHLOROPLASTIC"/>
    <property type="match status" value="1"/>
</dbReference>
<dbReference type="PANTHER" id="PTHR21089">
    <property type="entry name" value="SHIKIMATE DEHYDROGENASE"/>
    <property type="match status" value="1"/>
</dbReference>
<dbReference type="Pfam" id="PF18317">
    <property type="entry name" value="SDH_C"/>
    <property type="match status" value="1"/>
</dbReference>
<dbReference type="Pfam" id="PF01488">
    <property type="entry name" value="Shikimate_DH"/>
    <property type="match status" value="1"/>
</dbReference>
<dbReference type="Pfam" id="PF08501">
    <property type="entry name" value="Shikimate_dh_N"/>
    <property type="match status" value="1"/>
</dbReference>
<dbReference type="SUPFAM" id="SSF53223">
    <property type="entry name" value="Aminoacid dehydrogenase-like, N-terminal domain"/>
    <property type="match status" value="1"/>
</dbReference>
<dbReference type="SUPFAM" id="SSF51735">
    <property type="entry name" value="NAD(P)-binding Rossmann-fold domains"/>
    <property type="match status" value="1"/>
</dbReference>
<accession>B7HCW1</accession>
<keyword id="KW-0028">Amino-acid biosynthesis</keyword>
<keyword id="KW-0057">Aromatic amino acid biosynthesis</keyword>
<keyword id="KW-0521">NADP</keyword>
<keyword id="KW-0560">Oxidoreductase</keyword>
<evidence type="ECO:0000255" key="1">
    <source>
        <dbReference type="HAMAP-Rule" id="MF_00222"/>
    </source>
</evidence>
<proteinExistence type="inferred from homology"/>
<gene>
    <name evidence="1" type="primary">aroE</name>
    <name type="ordered locus">BCB4264_A4454</name>
</gene>
<reference key="1">
    <citation type="submission" date="2008-10" db="EMBL/GenBank/DDBJ databases">
        <title>Genome sequence of Bacillus cereus B4264.</title>
        <authorList>
            <person name="Dodson R.J."/>
            <person name="Durkin A.S."/>
            <person name="Rosovitz M.J."/>
            <person name="Rasko D.A."/>
            <person name="Hoffmaster A."/>
            <person name="Ravel J."/>
            <person name="Sutton G."/>
        </authorList>
    </citation>
    <scope>NUCLEOTIDE SEQUENCE [LARGE SCALE GENOMIC DNA]</scope>
    <source>
        <strain>B4264</strain>
    </source>
</reference>
<sequence length="277" mass="30304">MKQLYGVIGNPIGHSLSPVMHNDAFEHLNMDAHYHAFLVEEELLGEAVRGLKALGISGFNVTTPHKVAIMEYLDEIDPLARKIGAVNTVVHKDGRLIGYNTDGIGFVRALQSISNEPLQGKRILLLGSGGASRAIYFSLADVGVKEIDVANRTVDKAKELIAARTADVNSVALSLEKATEEQGNYDIIIQTTTIGMHPHVEHTPLQICSLKKGTIVSDIIYNPFETKILCEAKEQGAIIQNGIDMFVYQGALAFEMWTGRTPNIERMKQLVIEKLGG</sequence>
<feature type="chain" id="PRO_1000118870" description="Shikimate dehydrogenase (NADP(+))">
    <location>
        <begin position="1"/>
        <end position="277"/>
    </location>
</feature>
<feature type="active site" description="Proton acceptor" evidence="1">
    <location>
        <position position="66"/>
    </location>
</feature>
<feature type="binding site" evidence="1">
    <location>
        <begin position="15"/>
        <end position="17"/>
    </location>
    <ligand>
        <name>shikimate</name>
        <dbReference type="ChEBI" id="CHEBI:36208"/>
    </ligand>
</feature>
<feature type="binding site" evidence="1">
    <location>
        <position position="62"/>
    </location>
    <ligand>
        <name>shikimate</name>
        <dbReference type="ChEBI" id="CHEBI:36208"/>
    </ligand>
</feature>
<feature type="binding site" evidence="1">
    <location>
        <position position="87"/>
    </location>
    <ligand>
        <name>shikimate</name>
        <dbReference type="ChEBI" id="CHEBI:36208"/>
    </ligand>
</feature>
<feature type="binding site" evidence="1">
    <location>
        <position position="102"/>
    </location>
    <ligand>
        <name>shikimate</name>
        <dbReference type="ChEBI" id="CHEBI:36208"/>
    </ligand>
</feature>
<feature type="binding site" evidence="1">
    <location>
        <begin position="127"/>
        <end position="131"/>
    </location>
    <ligand>
        <name>NADP(+)</name>
        <dbReference type="ChEBI" id="CHEBI:58349"/>
    </ligand>
</feature>
<feature type="binding site" evidence="1">
    <location>
        <begin position="151"/>
        <end position="156"/>
    </location>
    <ligand>
        <name>NADP(+)</name>
        <dbReference type="ChEBI" id="CHEBI:58349"/>
    </ligand>
</feature>
<feature type="binding site" evidence="1">
    <location>
        <position position="219"/>
    </location>
    <ligand>
        <name>NADP(+)</name>
        <dbReference type="ChEBI" id="CHEBI:58349"/>
    </ligand>
</feature>
<feature type="binding site" evidence="1">
    <location>
        <position position="221"/>
    </location>
    <ligand>
        <name>shikimate</name>
        <dbReference type="ChEBI" id="CHEBI:36208"/>
    </ligand>
</feature>
<feature type="binding site" evidence="1">
    <location>
        <position position="242"/>
    </location>
    <ligand>
        <name>NADP(+)</name>
        <dbReference type="ChEBI" id="CHEBI:58349"/>
    </ligand>
</feature>
<comment type="function">
    <text evidence="1">Involved in the biosynthesis of the chorismate, which leads to the biosynthesis of aromatic amino acids. Catalyzes the reversible NADPH linked reduction of 3-dehydroshikimate (DHSA) to yield shikimate (SA).</text>
</comment>
<comment type="catalytic activity">
    <reaction evidence="1">
        <text>shikimate + NADP(+) = 3-dehydroshikimate + NADPH + H(+)</text>
        <dbReference type="Rhea" id="RHEA:17737"/>
        <dbReference type="ChEBI" id="CHEBI:15378"/>
        <dbReference type="ChEBI" id="CHEBI:16630"/>
        <dbReference type="ChEBI" id="CHEBI:36208"/>
        <dbReference type="ChEBI" id="CHEBI:57783"/>
        <dbReference type="ChEBI" id="CHEBI:58349"/>
        <dbReference type="EC" id="1.1.1.25"/>
    </reaction>
</comment>
<comment type="pathway">
    <text evidence="1">Metabolic intermediate biosynthesis; chorismate biosynthesis; chorismate from D-erythrose 4-phosphate and phosphoenolpyruvate: step 4/7.</text>
</comment>
<comment type="subunit">
    <text evidence="1">Homodimer.</text>
</comment>
<comment type="similarity">
    <text evidence="1">Belongs to the shikimate dehydrogenase family.</text>
</comment>
<protein>
    <recommendedName>
        <fullName evidence="1">Shikimate dehydrogenase (NADP(+))</fullName>
        <shortName evidence="1">SDH</shortName>
        <ecNumber evidence="1">1.1.1.25</ecNumber>
    </recommendedName>
</protein>